<gene>
    <name type="primary">clpB</name>
    <name type="ordered locus">HI_0859</name>
</gene>
<comment type="function">
    <text evidence="1">Part of a stress-induced multi-chaperone system, it is involved in the recovery of the cell from heat-induced damage, in cooperation with DnaK, DnaJ and GrpE. Acts before DnaK, in the processing of protein aggregates. Protein binding stimulates the ATPase activity; ATP hydrolysis unfolds the denatured protein aggregates, which probably helps expose new hydrophobic binding sites on the surface of ClpB-bound aggregates, contributing to the solubilization and refolding of denatured protein aggregates by DnaK (By similarity).</text>
</comment>
<comment type="subunit">
    <text evidence="1">Homohexamer. The oligomerization is ATP-dependent (By similarity).</text>
</comment>
<comment type="subcellular location">
    <subcellularLocation>
        <location evidence="3">Cytoplasm</location>
    </subcellularLocation>
</comment>
<comment type="domain">
    <text evidence="1">The Clp repeat (R) domain probably functions as a substrate-discriminating domain, recruiting aggregated proteins to the ClpB hexamer and/or stabilizing bound proteins. The NBD2 domain is responsible for oligomerization, whereas the NBD1 domain stabilizes the hexamer probably in an ATP-dependent manner. The movement of the coiled-coil domain is essential for ClpB ability to rescue proteins from an aggregated state, probably by pulling apart large aggregated proteins, which are bound between the coiled-coils motifs of adjacent ClpB subunits in the functional hexamer (By similarity).</text>
</comment>
<comment type="similarity">
    <text evidence="3">Belongs to the ClpA/ClpB family.</text>
</comment>
<sequence length="856" mass="95837">MNIEKFTTKFQEALSERQSLAIGKDNQFIEPVHLLTALLNQQGGSIAPILTASGVNVALLRNELKTELNKLPQVIGNGGDVQLSRQLINLLNLCDKFAQQNQDKFISSELFLFAALEERGTISDILKKCGAKKEQISQAIQHIRGGQNVNDQNAEESRQALEKYTIDLTARAESGKLDPVIGRDEEIRRAIQVLQRRTKNNPVLIGEPGVGKTAIVEGLAQRIVNGEVPEGLKNKRVLSLDMGALIAGAKYRGEFEERLKAVLNELSKEEGRVILFIDEIHTMVGAGKTDGAMDAGNLLKPSLARGELHCVGATTLDEYRQYIEKDAALERRFQKVFVDEPSVEDTIAILRGLKERYEIHHHVDITDPAIVAAATLSHRYISDRQLPDKAIDLIDEAASSIRMEIDSKPEPLDRLERRIIQLKLEQQALQKEEDEASRKRLEMLEKELAEKEREYAELEEVWKSEKATLSGSQHIKQELDTAKTELEQARRAGDLAKMSELQYGRIPDLEKQLEQAETSEGKEMTLLRYRVTDEEIAEVLSKATGIPVSKMMEGEKEKLLRMEDELHKRVIGQEEAVDAVANAIRRSRAGLSDPNRPIGSFLFLGPTGVGKTELCKTLAKFLFDSEDAMVRIDMSEFMEKHSVSRLVGAPPGYVGYEEGGYLTEAVRRRPYSVILLDEVEKAHADVFNILLQVLDDGRLTDGQGRTVDFRNTVVIMTSNLGSDLIQGNKDESYSEMKALVMSVVSQHFRPEFINRIDETVVFHPLGKENIRAIASIQLERLAKRMETRGYELVFTDALLDFIGEVGYDPIYGARPLKRAIQQEIENSLAQQILSGALLPGKVVTIDYANAEVQARQ</sequence>
<feature type="chain" id="PRO_0000191127" description="Chaperone protein ClpB">
    <location>
        <begin position="1"/>
        <end position="856"/>
    </location>
</feature>
<feature type="domain" description="Clp R" evidence="2">
    <location>
        <begin position="3"/>
        <end position="146"/>
    </location>
</feature>
<feature type="region of interest" description="Repeat 1" evidence="2">
    <location>
        <begin position="6"/>
        <end position="71"/>
    </location>
</feature>
<feature type="region of interest" description="Repeat 2" evidence="2">
    <location>
        <begin position="83"/>
        <end position="146"/>
    </location>
</feature>
<feature type="region of interest" description="NBD1" evidence="1">
    <location>
        <begin position="159"/>
        <end position="340"/>
    </location>
</feature>
<feature type="region of interest" description="Linker" evidence="1">
    <location>
        <begin position="341"/>
        <end position="545"/>
    </location>
</feature>
<feature type="region of interest" description="NBD2" evidence="1">
    <location>
        <begin position="555"/>
        <end position="764"/>
    </location>
</feature>
<feature type="region of interest" description="C-terminal" evidence="1">
    <location>
        <begin position="765"/>
        <end position="856"/>
    </location>
</feature>
<feature type="coiled-coil region" evidence="1">
    <location>
        <begin position="391"/>
        <end position="523"/>
    </location>
</feature>
<feature type="binding site" evidence="1">
    <location>
        <begin position="206"/>
        <end position="213"/>
    </location>
    <ligand>
        <name>ATP</name>
        <dbReference type="ChEBI" id="CHEBI:30616"/>
        <label>1</label>
    </ligand>
</feature>
<feature type="binding site" evidence="1">
    <location>
        <begin position="605"/>
        <end position="612"/>
    </location>
    <ligand>
        <name>ATP</name>
        <dbReference type="ChEBI" id="CHEBI:30616"/>
        <label>2</label>
    </ligand>
</feature>
<reference key="1">
    <citation type="journal article" date="1995" name="Science">
        <title>Whole-genome random sequencing and assembly of Haemophilus influenzae Rd.</title>
        <authorList>
            <person name="Fleischmann R.D."/>
            <person name="Adams M.D."/>
            <person name="White O."/>
            <person name="Clayton R.A."/>
            <person name="Kirkness E.F."/>
            <person name="Kerlavage A.R."/>
            <person name="Bult C.J."/>
            <person name="Tomb J.-F."/>
            <person name="Dougherty B.A."/>
            <person name="Merrick J.M."/>
            <person name="McKenney K."/>
            <person name="Sutton G.G."/>
            <person name="FitzHugh W."/>
            <person name="Fields C.A."/>
            <person name="Gocayne J.D."/>
            <person name="Scott J.D."/>
            <person name="Shirley R."/>
            <person name="Liu L.-I."/>
            <person name="Glodek A."/>
            <person name="Kelley J.M."/>
            <person name="Weidman J.F."/>
            <person name="Phillips C.A."/>
            <person name="Spriggs T."/>
            <person name="Hedblom E."/>
            <person name="Cotton M.D."/>
            <person name="Utterback T.R."/>
            <person name="Hanna M.C."/>
            <person name="Nguyen D.T."/>
            <person name="Saudek D.M."/>
            <person name="Brandon R.C."/>
            <person name="Fine L.D."/>
            <person name="Fritchman J.L."/>
            <person name="Fuhrmann J.L."/>
            <person name="Geoghagen N.S.M."/>
            <person name="Gnehm C.L."/>
            <person name="McDonald L.A."/>
            <person name="Small K.V."/>
            <person name="Fraser C.M."/>
            <person name="Smith H.O."/>
            <person name="Venter J.C."/>
        </authorList>
    </citation>
    <scope>NUCLEOTIDE SEQUENCE [LARGE SCALE GENOMIC DNA]</scope>
    <source>
        <strain>ATCC 51907 / DSM 11121 / KW20 / Rd</strain>
    </source>
</reference>
<name>CLPB_HAEIN</name>
<dbReference type="EMBL" id="L42023">
    <property type="protein sequence ID" value="AAC22518.1"/>
    <property type="molecule type" value="Genomic_DNA"/>
</dbReference>
<dbReference type="PIR" id="F64098">
    <property type="entry name" value="F64098"/>
</dbReference>
<dbReference type="RefSeq" id="NP_439019.1">
    <property type="nucleotide sequence ID" value="NC_000907.1"/>
</dbReference>
<dbReference type="SMR" id="P44403"/>
<dbReference type="STRING" id="71421.HI_0859"/>
<dbReference type="EnsemblBacteria" id="AAC22518">
    <property type="protein sequence ID" value="AAC22518"/>
    <property type="gene ID" value="HI_0859"/>
</dbReference>
<dbReference type="KEGG" id="hin:HI_0859"/>
<dbReference type="PATRIC" id="fig|71421.8.peg.900"/>
<dbReference type="eggNOG" id="COG0542">
    <property type="taxonomic scope" value="Bacteria"/>
</dbReference>
<dbReference type="HOGENOM" id="CLU_005070_4_0_6"/>
<dbReference type="OrthoDB" id="9803641at2"/>
<dbReference type="PhylomeDB" id="P44403"/>
<dbReference type="BioCyc" id="HINF71421:G1GJ1-900-MONOMER"/>
<dbReference type="Proteomes" id="UP000000579">
    <property type="component" value="Chromosome"/>
</dbReference>
<dbReference type="GO" id="GO:0005737">
    <property type="term" value="C:cytoplasm"/>
    <property type="evidence" value="ECO:0000318"/>
    <property type="project" value="GO_Central"/>
</dbReference>
<dbReference type="GO" id="GO:0005524">
    <property type="term" value="F:ATP binding"/>
    <property type="evidence" value="ECO:0007669"/>
    <property type="project" value="UniProtKB-KW"/>
</dbReference>
<dbReference type="GO" id="GO:0016887">
    <property type="term" value="F:ATP hydrolysis activity"/>
    <property type="evidence" value="ECO:0000318"/>
    <property type="project" value="GO_Central"/>
</dbReference>
<dbReference type="GO" id="GO:0034605">
    <property type="term" value="P:cellular response to heat"/>
    <property type="evidence" value="ECO:0000318"/>
    <property type="project" value="GO_Central"/>
</dbReference>
<dbReference type="GO" id="GO:0042026">
    <property type="term" value="P:protein refolding"/>
    <property type="evidence" value="ECO:0007669"/>
    <property type="project" value="InterPro"/>
</dbReference>
<dbReference type="CDD" id="cd00009">
    <property type="entry name" value="AAA"/>
    <property type="match status" value="1"/>
</dbReference>
<dbReference type="CDD" id="cd19499">
    <property type="entry name" value="RecA-like_ClpB_Hsp104-like"/>
    <property type="match status" value="1"/>
</dbReference>
<dbReference type="FunFam" id="1.10.1780.10:FF:000003">
    <property type="entry name" value="ATP-dependent chaperone ClpB"/>
    <property type="match status" value="1"/>
</dbReference>
<dbReference type="FunFam" id="1.10.8.60:FF:000017">
    <property type="entry name" value="ATP-dependent chaperone ClpB"/>
    <property type="match status" value="1"/>
</dbReference>
<dbReference type="FunFam" id="3.40.50.300:FF:000120">
    <property type="entry name" value="ATP-dependent chaperone ClpB"/>
    <property type="match status" value="1"/>
</dbReference>
<dbReference type="FunFam" id="3.40.50.300:FF:000025">
    <property type="entry name" value="ATP-dependent Clp protease subunit"/>
    <property type="match status" value="1"/>
</dbReference>
<dbReference type="FunFam" id="3.40.50.300:FF:000010">
    <property type="entry name" value="Chaperone clpB 1, putative"/>
    <property type="match status" value="1"/>
</dbReference>
<dbReference type="Gene3D" id="1.10.8.60">
    <property type="match status" value="1"/>
</dbReference>
<dbReference type="Gene3D" id="1.10.1780.10">
    <property type="entry name" value="Clp, N-terminal domain"/>
    <property type="match status" value="1"/>
</dbReference>
<dbReference type="Gene3D" id="3.40.50.300">
    <property type="entry name" value="P-loop containing nucleotide triphosphate hydrolases"/>
    <property type="match status" value="3"/>
</dbReference>
<dbReference type="InterPro" id="IPR003593">
    <property type="entry name" value="AAA+_ATPase"/>
</dbReference>
<dbReference type="InterPro" id="IPR003959">
    <property type="entry name" value="ATPase_AAA_core"/>
</dbReference>
<dbReference type="InterPro" id="IPR017730">
    <property type="entry name" value="Chaperonin_ClpB"/>
</dbReference>
<dbReference type="InterPro" id="IPR019489">
    <property type="entry name" value="Clp_ATPase_C"/>
</dbReference>
<dbReference type="InterPro" id="IPR036628">
    <property type="entry name" value="Clp_N_dom_sf"/>
</dbReference>
<dbReference type="InterPro" id="IPR004176">
    <property type="entry name" value="Clp_R_dom"/>
</dbReference>
<dbReference type="InterPro" id="IPR001270">
    <property type="entry name" value="ClpA/B"/>
</dbReference>
<dbReference type="InterPro" id="IPR018368">
    <property type="entry name" value="ClpA/B_CS1"/>
</dbReference>
<dbReference type="InterPro" id="IPR028299">
    <property type="entry name" value="ClpA/B_CS2"/>
</dbReference>
<dbReference type="InterPro" id="IPR041546">
    <property type="entry name" value="ClpA/ClpB_AAA_lid"/>
</dbReference>
<dbReference type="InterPro" id="IPR050130">
    <property type="entry name" value="ClpA_ClpB"/>
</dbReference>
<dbReference type="InterPro" id="IPR027417">
    <property type="entry name" value="P-loop_NTPase"/>
</dbReference>
<dbReference type="NCBIfam" id="TIGR03346">
    <property type="entry name" value="chaperone_ClpB"/>
    <property type="match status" value="1"/>
</dbReference>
<dbReference type="NCBIfam" id="NF008118">
    <property type="entry name" value="PRK10865.1"/>
    <property type="match status" value="1"/>
</dbReference>
<dbReference type="PANTHER" id="PTHR11638">
    <property type="entry name" value="ATP-DEPENDENT CLP PROTEASE"/>
    <property type="match status" value="1"/>
</dbReference>
<dbReference type="PANTHER" id="PTHR11638:SF18">
    <property type="entry name" value="HEAT SHOCK PROTEIN 104"/>
    <property type="match status" value="1"/>
</dbReference>
<dbReference type="Pfam" id="PF00004">
    <property type="entry name" value="AAA"/>
    <property type="match status" value="1"/>
</dbReference>
<dbReference type="Pfam" id="PF07724">
    <property type="entry name" value="AAA_2"/>
    <property type="match status" value="1"/>
</dbReference>
<dbReference type="Pfam" id="PF17871">
    <property type="entry name" value="AAA_lid_9"/>
    <property type="match status" value="1"/>
</dbReference>
<dbReference type="Pfam" id="PF02861">
    <property type="entry name" value="Clp_N"/>
    <property type="match status" value="2"/>
</dbReference>
<dbReference type="Pfam" id="PF10431">
    <property type="entry name" value="ClpB_D2-small"/>
    <property type="match status" value="1"/>
</dbReference>
<dbReference type="PRINTS" id="PR00300">
    <property type="entry name" value="CLPPROTEASEA"/>
</dbReference>
<dbReference type="SMART" id="SM00382">
    <property type="entry name" value="AAA"/>
    <property type="match status" value="2"/>
</dbReference>
<dbReference type="SMART" id="SM01086">
    <property type="entry name" value="ClpB_D2-small"/>
    <property type="match status" value="1"/>
</dbReference>
<dbReference type="SUPFAM" id="SSF81923">
    <property type="entry name" value="Double Clp-N motif"/>
    <property type="match status" value="1"/>
</dbReference>
<dbReference type="SUPFAM" id="SSF52540">
    <property type="entry name" value="P-loop containing nucleoside triphosphate hydrolases"/>
    <property type="match status" value="2"/>
</dbReference>
<dbReference type="PROSITE" id="PS51903">
    <property type="entry name" value="CLP_R"/>
    <property type="match status" value="1"/>
</dbReference>
<dbReference type="PROSITE" id="PS00870">
    <property type="entry name" value="CLPAB_1"/>
    <property type="match status" value="1"/>
</dbReference>
<dbReference type="PROSITE" id="PS00871">
    <property type="entry name" value="CLPAB_2"/>
    <property type="match status" value="1"/>
</dbReference>
<evidence type="ECO:0000250" key="1"/>
<evidence type="ECO:0000255" key="2">
    <source>
        <dbReference type="PROSITE-ProRule" id="PRU01251"/>
    </source>
</evidence>
<evidence type="ECO:0000305" key="3"/>
<organism>
    <name type="scientific">Haemophilus influenzae (strain ATCC 51907 / DSM 11121 / KW20 / Rd)</name>
    <dbReference type="NCBI Taxonomy" id="71421"/>
    <lineage>
        <taxon>Bacteria</taxon>
        <taxon>Pseudomonadati</taxon>
        <taxon>Pseudomonadota</taxon>
        <taxon>Gammaproteobacteria</taxon>
        <taxon>Pasteurellales</taxon>
        <taxon>Pasteurellaceae</taxon>
        <taxon>Haemophilus</taxon>
    </lineage>
</organism>
<accession>P44403</accession>
<proteinExistence type="inferred from homology"/>
<protein>
    <recommendedName>
        <fullName>Chaperone protein ClpB</fullName>
    </recommendedName>
</protein>
<keyword id="KW-0067">ATP-binding</keyword>
<keyword id="KW-0143">Chaperone</keyword>
<keyword id="KW-0175">Coiled coil</keyword>
<keyword id="KW-0963">Cytoplasm</keyword>
<keyword id="KW-0547">Nucleotide-binding</keyword>
<keyword id="KW-1185">Reference proteome</keyword>
<keyword id="KW-0677">Repeat</keyword>
<keyword id="KW-0346">Stress response</keyword>